<accession>Q9WVA9</accession>
<gene>
    <name type="primary">Npff</name>
</gene>
<protein>
    <recommendedName>
        <fullName>Pro-FMRFamide-related neuropeptide FF</fullName>
    </recommendedName>
    <alternativeName>
        <fullName>FMRFamide-related peptides</fullName>
    </alternativeName>
    <component>
        <recommendedName>
            <fullName>Neuropeptide SF</fullName>
            <shortName>NPSF</shortName>
        </recommendedName>
    </component>
    <component>
        <recommendedName>
            <fullName>Neuropeptide FF</fullName>
            <shortName>NPFF</shortName>
        </recommendedName>
    </component>
    <component>
        <recommendedName>
            <fullName>Neuropeptide AF-like</fullName>
            <shortName>NPAF</shortName>
        </recommendedName>
    </component>
</protein>
<organism>
    <name type="scientific">Rattus norvegicus</name>
    <name type="common">Rat</name>
    <dbReference type="NCBI Taxonomy" id="10116"/>
    <lineage>
        <taxon>Eukaryota</taxon>
        <taxon>Metazoa</taxon>
        <taxon>Chordata</taxon>
        <taxon>Craniata</taxon>
        <taxon>Vertebrata</taxon>
        <taxon>Euteleostomi</taxon>
        <taxon>Mammalia</taxon>
        <taxon>Eutheria</taxon>
        <taxon>Euarchontoglires</taxon>
        <taxon>Glires</taxon>
        <taxon>Rodentia</taxon>
        <taxon>Myomorpha</taxon>
        <taxon>Muroidea</taxon>
        <taxon>Muridae</taxon>
        <taxon>Murinae</taxon>
        <taxon>Rattus</taxon>
    </lineage>
</organism>
<proteinExistence type="inferred from homology"/>
<name>NPFF_RAT</name>
<reference key="1">
    <citation type="journal article" date="1999" name="Mol. Pharmacol.">
        <title>Gene for pain modulatory neuropeptide NPFF: induction in spinal cord by noxious stimuli.</title>
        <authorList>
            <person name="Vilim F.S."/>
            <person name="Aarnisalo A.A."/>
            <person name="Nieminen M.L."/>
            <person name="Lintunen M."/>
            <person name="Karlstedt K."/>
            <person name="Kontinen V.K."/>
            <person name="Kalso E."/>
            <person name="States B."/>
            <person name="Panula P."/>
            <person name="Ziff E."/>
        </authorList>
    </citation>
    <scope>NUCLEOTIDE SEQUENCE [MRNA]</scope>
    <source>
        <strain>Sprague-Dawley</strain>
        <tissue>Brain</tissue>
    </source>
</reference>
<reference key="2">
    <citation type="journal article" date="2001" name="Neuropharmacology">
        <title>Selective modulation of heteromeric ASIC proton-gated channels by neuropeptide FF.</title>
        <authorList>
            <person name="Catarsi S."/>
            <person name="Babinski K."/>
            <person name="Seguela P."/>
        </authorList>
    </citation>
    <scope>FUNCTION</scope>
</reference>
<reference key="3">
    <citation type="journal article" date="2003" name="Neuropharmacology">
        <title>Effects of neuropeptide SF and related peptides on acid sensing ion channel 3 and sensory neuron excitability.</title>
        <authorList>
            <person name="Deval E."/>
            <person name="Baron A."/>
            <person name="Lingueglia E."/>
            <person name="Mazarguil H."/>
            <person name="Zajac J.-M."/>
            <person name="Lazdunski M."/>
        </authorList>
    </citation>
    <scope>FUNCTION</scope>
</reference>
<dbReference type="EMBL" id="AF148700">
    <property type="protein sequence ID" value="AAD39828.1"/>
    <property type="molecule type" value="mRNA"/>
</dbReference>
<dbReference type="RefSeq" id="NP_072108.1">
    <property type="nucleotide sequence ID" value="NM_022586.1"/>
</dbReference>
<dbReference type="FunCoup" id="Q9WVA9">
    <property type="interactions" value="30"/>
</dbReference>
<dbReference type="STRING" id="10116.ENSRNOP00000065607"/>
<dbReference type="BindingDB" id="Q9WVA9"/>
<dbReference type="PaxDb" id="10116-ENSRNOP00000065607"/>
<dbReference type="GeneID" id="60337"/>
<dbReference type="KEGG" id="rno:60337"/>
<dbReference type="AGR" id="RGD:62033"/>
<dbReference type="CTD" id="8620"/>
<dbReference type="RGD" id="62033">
    <property type="gene designation" value="Npff"/>
</dbReference>
<dbReference type="eggNOG" id="ENOG502S60B">
    <property type="taxonomic scope" value="Eukaryota"/>
</dbReference>
<dbReference type="HOGENOM" id="CLU_169782_0_0_1"/>
<dbReference type="InParanoid" id="Q9WVA9"/>
<dbReference type="OrthoDB" id="8878267at2759"/>
<dbReference type="PhylomeDB" id="Q9WVA9"/>
<dbReference type="Reactome" id="R-RNO-389397">
    <property type="pathway name" value="Orexin and neuropeptides FF and QRFP bind to their respective receptors"/>
</dbReference>
<dbReference type="Reactome" id="R-RNO-416476">
    <property type="pathway name" value="G alpha (q) signalling events"/>
</dbReference>
<dbReference type="PRO" id="PR:Q9WVA9"/>
<dbReference type="Proteomes" id="UP000002494">
    <property type="component" value="Chromosome 7"/>
</dbReference>
<dbReference type="Bgee" id="ENSRNOG00000047739">
    <property type="expression patterns" value="Expressed in lung and 19 other cell types or tissues"/>
</dbReference>
<dbReference type="GO" id="GO:0043679">
    <property type="term" value="C:axon terminus"/>
    <property type="evidence" value="ECO:0000314"/>
    <property type="project" value="RGD"/>
</dbReference>
<dbReference type="GO" id="GO:0030425">
    <property type="term" value="C:dendrite"/>
    <property type="evidence" value="ECO:0000314"/>
    <property type="project" value="RGD"/>
</dbReference>
<dbReference type="GO" id="GO:0005615">
    <property type="term" value="C:extracellular space"/>
    <property type="evidence" value="ECO:0000314"/>
    <property type="project" value="RGD"/>
</dbReference>
<dbReference type="GO" id="GO:0098992">
    <property type="term" value="C:neuronal dense core vesicle"/>
    <property type="evidence" value="ECO:0000314"/>
    <property type="project" value="SynGO"/>
</dbReference>
<dbReference type="GO" id="GO:0043204">
    <property type="term" value="C:perikaryon"/>
    <property type="evidence" value="ECO:0000314"/>
    <property type="project" value="RGD"/>
</dbReference>
<dbReference type="GO" id="GO:0098794">
    <property type="term" value="C:postsynapse"/>
    <property type="evidence" value="ECO:0007669"/>
    <property type="project" value="GOC"/>
</dbReference>
<dbReference type="GO" id="GO:0031982">
    <property type="term" value="C:vesicle"/>
    <property type="evidence" value="ECO:0000314"/>
    <property type="project" value="RGD"/>
</dbReference>
<dbReference type="GO" id="GO:0001664">
    <property type="term" value="F:G protein-coupled receptor binding"/>
    <property type="evidence" value="ECO:0000314"/>
    <property type="project" value="RGD"/>
</dbReference>
<dbReference type="GO" id="GO:0160041">
    <property type="term" value="F:neuropeptide activity"/>
    <property type="evidence" value="ECO:0000266"/>
    <property type="project" value="RGD"/>
</dbReference>
<dbReference type="GO" id="GO:0005184">
    <property type="term" value="F:neuropeptide hormone activity"/>
    <property type="evidence" value="ECO:0000314"/>
    <property type="project" value="RGD"/>
</dbReference>
<dbReference type="GO" id="GO:0002438">
    <property type="term" value="P:acute inflammatory response to antigenic stimulus"/>
    <property type="evidence" value="ECO:0000270"/>
    <property type="project" value="RGD"/>
</dbReference>
<dbReference type="GO" id="GO:0060079">
    <property type="term" value="P:excitatory postsynaptic potential"/>
    <property type="evidence" value="ECO:0000314"/>
    <property type="project" value="RGD"/>
</dbReference>
<dbReference type="GO" id="GO:0060135">
    <property type="term" value="P:maternal process involved in female pregnancy"/>
    <property type="evidence" value="ECO:0000270"/>
    <property type="project" value="RGD"/>
</dbReference>
<dbReference type="GO" id="GO:0032099">
    <property type="term" value="P:negative regulation of appetite"/>
    <property type="evidence" value="ECO:0000314"/>
    <property type="project" value="RGD"/>
</dbReference>
<dbReference type="GO" id="GO:0010459">
    <property type="term" value="P:negative regulation of heart rate"/>
    <property type="evidence" value="ECO:0000314"/>
    <property type="project" value="RGD"/>
</dbReference>
<dbReference type="GO" id="GO:0046676">
    <property type="term" value="P:negative regulation of insulin secretion"/>
    <property type="evidence" value="ECO:0000314"/>
    <property type="project" value="RGD"/>
</dbReference>
<dbReference type="GO" id="GO:0007218">
    <property type="term" value="P:neuropeptide signaling pathway"/>
    <property type="evidence" value="ECO:0000266"/>
    <property type="project" value="RGD"/>
</dbReference>
<dbReference type="GO" id="GO:0045777">
    <property type="term" value="P:positive regulation of blood pressure"/>
    <property type="evidence" value="ECO:0000314"/>
    <property type="project" value="RGD"/>
</dbReference>
<dbReference type="GO" id="GO:0007204">
    <property type="term" value="P:positive regulation of cytosolic calcium ion concentration"/>
    <property type="evidence" value="ECO:0000314"/>
    <property type="project" value="RGD"/>
</dbReference>
<dbReference type="GO" id="GO:0003254">
    <property type="term" value="P:regulation of membrane depolarization"/>
    <property type="evidence" value="ECO:0000314"/>
    <property type="project" value="RGD"/>
</dbReference>
<dbReference type="GO" id="GO:0009410">
    <property type="term" value="P:response to xenobiotic stimulus"/>
    <property type="evidence" value="ECO:0000270"/>
    <property type="project" value="RGD"/>
</dbReference>
<dbReference type="GO" id="GO:0070253">
    <property type="term" value="P:somatostatin secretion"/>
    <property type="evidence" value="ECO:0000314"/>
    <property type="project" value="RGD"/>
</dbReference>
<dbReference type="GO" id="GO:0021510">
    <property type="term" value="P:spinal cord development"/>
    <property type="evidence" value="ECO:0000270"/>
    <property type="project" value="RGD"/>
</dbReference>
<dbReference type="GO" id="GO:0030103">
    <property type="term" value="P:vasopressin secretion"/>
    <property type="evidence" value="ECO:0000314"/>
    <property type="project" value="RGD"/>
</dbReference>
<dbReference type="InterPro" id="IPR008065">
    <property type="entry name" value="NPFF"/>
</dbReference>
<dbReference type="PANTHER" id="PTHR15044">
    <property type="entry name" value="NEUROPEPTIDE FF"/>
    <property type="match status" value="1"/>
</dbReference>
<dbReference type="PANTHER" id="PTHR15044:SF0">
    <property type="entry name" value="PRO-FMRFAMIDE-RELATED NEUROPEPTIDE FF"/>
    <property type="match status" value="1"/>
</dbReference>
<dbReference type="Pfam" id="PF15085">
    <property type="entry name" value="NPFF"/>
    <property type="match status" value="1"/>
</dbReference>
<dbReference type="PIRSF" id="PIRSF038092">
    <property type="entry name" value="FMRFamid-rel_pep_precur"/>
    <property type="match status" value="1"/>
</dbReference>
<dbReference type="PRINTS" id="PR01682">
    <property type="entry name" value="FMRFAMIDEPEP"/>
</dbReference>
<evidence type="ECO:0000250" key="1"/>
<evidence type="ECO:0000255" key="2"/>
<evidence type="ECO:0000256" key="3">
    <source>
        <dbReference type="SAM" id="MobiDB-lite"/>
    </source>
</evidence>
<evidence type="ECO:0000269" key="4">
    <source>
    </source>
</evidence>
<evidence type="ECO:0000269" key="5">
    <source>
    </source>
</evidence>
<evidence type="ECO:0000305" key="6"/>
<feature type="signal peptide" evidence="2">
    <location>
        <begin position="1"/>
        <end position="21"/>
    </location>
</feature>
<feature type="propeptide" id="PRO_0000009908">
    <location>
        <begin position="22"/>
        <end position="69"/>
    </location>
</feature>
<feature type="peptide" id="PRO_0000009909" description="Neuropeptide SF">
    <location>
        <begin position="72"/>
        <end position="82"/>
    </location>
</feature>
<feature type="peptide" id="PRO_0000009910" description="Neuropeptide FF">
    <location>
        <begin position="75"/>
        <end position="82"/>
    </location>
</feature>
<feature type="propeptide" id="PRO_0000009911">
    <location>
        <begin position="85"/>
        <end position="100"/>
    </location>
</feature>
<feature type="peptide" id="PRO_0000009912" description="Neuropeptide AF-like">
    <location>
        <begin position="101"/>
        <end position="111"/>
    </location>
</feature>
<feature type="region of interest" description="Disordered" evidence="3">
    <location>
        <begin position="29"/>
        <end position="51"/>
    </location>
</feature>
<feature type="modified residue" description="Phenylalanine amide" evidence="1">
    <location>
        <position position="82"/>
    </location>
</feature>
<feature type="modified residue" description="Phenylalanine amide" evidence="1">
    <location>
        <position position="111"/>
    </location>
</feature>
<sequence length="114" mass="13152">MDSKWAAVLLLLLLLRNWGHAEEAGSWGEDQVFAEEDKGPHPSQYAHTPDRIQTPGSLMRVLLQAMERPRRNPAFLFQPQRFGRNAWGPWSKEQLSPQAREFWSLAAPQRFGKK</sequence>
<comment type="function">
    <text evidence="4 5">Morphine modulating peptides. Have wide-ranging physiologic effects, including the modulation of morphine-induced analgesia, elevation of arterial blood pressure, and increased somatostatin secretion from the pancreas. Neuropeptide FF and SF potentiate and sensitize ASIC2 and ASIC3 channels.</text>
</comment>
<comment type="subcellular location">
    <subcellularLocation>
        <location>Secreted</location>
    </subcellularLocation>
</comment>
<comment type="similarity">
    <text evidence="6">Belongs to the FARP (FMRFamide related peptide) family.</text>
</comment>
<keyword id="KW-0027">Amidation</keyword>
<keyword id="KW-0165">Cleavage on pair of basic residues</keyword>
<keyword id="KW-0527">Neuropeptide</keyword>
<keyword id="KW-1185">Reference proteome</keyword>
<keyword id="KW-0964">Secreted</keyword>
<keyword id="KW-0732">Signal</keyword>